<name>IF6_PYRAE</name>
<sequence length="220" mass="23446">MFDITPIRVFGTSSIGVFIATNNTVTFIPPDVPEKIDDAVRNTLRTSVARFTVARSPLLGIFTVVNDNGVLLPPLVLEEEVRLFKALGLNVDIINTKYTAISNLILAGNKVALVSPLLEPSARKVVADVLGVEVIVDTIAGNPLVGALAVLNSRGLLVAPEATDDDLKKLSEYFKVRVDVGTVNRGKSFLRGGIVVNDNGALVGDETAGPELMRMQQVLG</sequence>
<comment type="function">
    <text evidence="1">Binds to the 50S ribosomal subunit and prevents its association with the 30S ribosomal subunit to form the 70S initiation complex.</text>
</comment>
<comment type="similarity">
    <text evidence="1">Belongs to the eIF-6 family.</text>
</comment>
<feature type="chain" id="PRO_0000153754" description="Translation initiation factor 6">
    <location>
        <begin position="1"/>
        <end position="220"/>
    </location>
</feature>
<protein>
    <recommendedName>
        <fullName evidence="1">Translation initiation factor 6</fullName>
        <shortName evidence="1">aIF-6</shortName>
    </recommendedName>
</protein>
<reference key="1">
    <citation type="journal article" date="2002" name="Proc. Natl. Acad. Sci. U.S.A.">
        <title>Genome sequence of the hyperthermophilic crenarchaeon Pyrobaculum aerophilum.</title>
        <authorList>
            <person name="Fitz-Gibbon S.T."/>
            <person name="Ladner H."/>
            <person name="Kim U.-J."/>
            <person name="Stetter K.O."/>
            <person name="Simon M.I."/>
            <person name="Miller J.H."/>
        </authorList>
    </citation>
    <scope>NUCLEOTIDE SEQUENCE [LARGE SCALE GENOMIC DNA]</scope>
    <source>
        <strain>ATCC 51768 / DSM 7523 / JCM 9630 / CIP 104966 / NBRC 100827 / IM2</strain>
    </source>
</reference>
<keyword id="KW-0396">Initiation factor</keyword>
<keyword id="KW-0648">Protein biosynthesis</keyword>
<keyword id="KW-1185">Reference proteome</keyword>
<proteinExistence type="inferred from homology"/>
<organism>
    <name type="scientific">Pyrobaculum aerophilum (strain ATCC 51768 / DSM 7523 / JCM 9630 / CIP 104966 / NBRC 100827 / IM2)</name>
    <dbReference type="NCBI Taxonomy" id="178306"/>
    <lineage>
        <taxon>Archaea</taxon>
        <taxon>Thermoproteota</taxon>
        <taxon>Thermoprotei</taxon>
        <taxon>Thermoproteales</taxon>
        <taxon>Thermoproteaceae</taxon>
        <taxon>Pyrobaculum</taxon>
    </lineage>
</organism>
<gene>
    <name evidence="1" type="primary">eif6</name>
    <name type="ordered locus">PAE3097</name>
</gene>
<accession>Q8ZTU1</accession>
<evidence type="ECO:0000255" key="1">
    <source>
        <dbReference type="HAMAP-Rule" id="MF_00032"/>
    </source>
</evidence>
<dbReference type="EMBL" id="AE009441">
    <property type="protein sequence ID" value="AAL64668.1"/>
    <property type="molecule type" value="Genomic_DNA"/>
</dbReference>
<dbReference type="RefSeq" id="WP_011009136.1">
    <property type="nucleotide sequence ID" value="NC_003364.1"/>
</dbReference>
<dbReference type="SMR" id="Q8ZTU1"/>
<dbReference type="FunCoup" id="Q8ZTU1">
    <property type="interactions" value="183"/>
</dbReference>
<dbReference type="STRING" id="178306.PAE3097"/>
<dbReference type="EnsemblBacteria" id="AAL64668">
    <property type="protein sequence ID" value="AAL64668"/>
    <property type="gene ID" value="PAE3097"/>
</dbReference>
<dbReference type="GeneID" id="1463844"/>
<dbReference type="KEGG" id="pai:PAE3097"/>
<dbReference type="PATRIC" id="fig|178306.9.peg.2327"/>
<dbReference type="eggNOG" id="arCOG04176">
    <property type="taxonomic scope" value="Archaea"/>
</dbReference>
<dbReference type="HOGENOM" id="CLU_071894_1_0_2"/>
<dbReference type="InParanoid" id="Q8ZTU1"/>
<dbReference type="Proteomes" id="UP000002439">
    <property type="component" value="Chromosome"/>
</dbReference>
<dbReference type="GO" id="GO:0005829">
    <property type="term" value="C:cytosol"/>
    <property type="evidence" value="ECO:0000318"/>
    <property type="project" value="GO_Central"/>
</dbReference>
<dbReference type="GO" id="GO:0043022">
    <property type="term" value="F:ribosome binding"/>
    <property type="evidence" value="ECO:0007669"/>
    <property type="project" value="InterPro"/>
</dbReference>
<dbReference type="GO" id="GO:0003743">
    <property type="term" value="F:translation initiation factor activity"/>
    <property type="evidence" value="ECO:0007669"/>
    <property type="project" value="UniProtKB-UniRule"/>
</dbReference>
<dbReference type="GO" id="GO:1902626">
    <property type="term" value="P:assembly of large subunit precursor of preribosome"/>
    <property type="evidence" value="ECO:0000318"/>
    <property type="project" value="GO_Central"/>
</dbReference>
<dbReference type="GO" id="GO:0042256">
    <property type="term" value="P:cytosolic ribosome assembly"/>
    <property type="evidence" value="ECO:0007669"/>
    <property type="project" value="InterPro"/>
</dbReference>
<dbReference type="GO" id="GO:0000460">
    <property type="term" value="P:maturation of 5.8S rRNA"/>
    <property type="evidence" value="ECO:0000318"/>
    <property type="project" value="GO_Central"/>
</dbReference>
<dbReference type="GO" id="GO:0000470">
    <property type="term" value="P:maturation of LSU-rRNA"/>
    <property type="evidence" value="ECO:0000318"/>
    <property type="project" value="GO_Central"/>
</dbReference>
<dbReference type="Gene3D" id="3.75.10.10">
    <property type="entry name" value="L-arginine/glycine Amidinotransferase, Chain A"/>
    <property type="match status" value="1"/>
</dbReference>
<dbReference type="HAMAP" id="MF_00032">
    <property type="entry name" value="eIF_6"/>
    <property type="match status" value="1"/>
</dbReference>
<dbReference type="InterPro" id="IPR002769">
    <property type="entry name" value="eIF6"/>
</dbReference>
<dbReference type="NCBIfam" id="TIGR00323">
    <property type="entry name" value="eIF-6"/>
    <property type="match status" value="1"/>
</dbReference>
<dbReference type="NCBIfam" id="NF003126">
    <property type="entry name" value="PRK04046.1-1"/>
    <property type="match status" value="1"/>
</dbReference>
<dbReference type="PANTHER" id="PTHR10784">
    <property type="entry name" value="TRANSLATION INITIATION FACTOR 6"/>
    <property type="match status" value="1"/>
</dbReference>
<dbReference type="Pfam" id="PF01912">
    <property type="entry name" value="eIF-6"/>
    <property type="match status" value="1"/>
</dbReference>
<dbReference type="PIRSF" id="PIRSF006413">
    <property type="entry name" value="IF-6"/>
    <property type="match status" value="1"/>
</dbReference>
<dbReference type="SMART" id="SM00654">
    <property type="entry name" value="eIF6"/>
    <property type="match status" value="1"/>
</dbReference>
<dbReference type="SUPFAM" id="SSF55909">
    <property type="entry name" value="Pentein"/>
    <property type="match status" value="1"/>
</dbReference>